<name>CYTAR_HYPEX</name>
<protein>
    <recommendedName>
        <fullName evidence="4">Cytotardin</fullName>
    </recommendedName>
</protein>
<proteinExistence type="evidence at transcript level"/>
<organism evidence="4">
    <name type="scientific">Hypsibius exemplaris</name>
    <name type="common">Freshwater tardigrade</name>
    <dbReference type="NCBI Taxonomy" id="2072580"/>
    <lineage>
        <taxon>Eukaryota</taxon>
        <taxon>Metazoa</taxon>
        <taxon>Ecdysozoa</taxon>
        <taxon>Tardigrada</taxon>
        <taxon>Eutardigrada</taxon>
        <taxon>Parachela</taxon>
        <taxon>Hypsibioidea</taxon>
        <taxon>Hypsibiidae</taxon>
        <taxon>Hypsibius</taxon>
    </lineage>
</organism>
<dbReference type="EMBL" id="KU295462">
    <property type="protein sequence ID" value="AME17872.1"/>
    <property type="molecule type" value="mRNA"/>
</dbReference>
<dbReference type="SMR" id="A0A125S9M6"/>
<dbReference type="GO" id="GO:0005938">
    <property type="term" value="C:cell cortex"/>
    <property type="evidence" value="ECO:0007669"/>
    <property type="project" value="UniProtKB-SubCell"/>
</dbReference>
<dbReference type="GO" id="GO:0005882">
    <property type="term" value="C:intermediate filament"/>
    <property type="evidence" value="ECO:0007669"/>
    <property type="project" value="UniProtKB-KW"/>
</dbReference>
<dbReference type="GO" id="GO:0005635">
    <property type="term" value="C:nuclear envelope"/>
    <property type="evidence" value="ECO:0007669"/>
    <property type="project" value="TreeGrafter"/>
</dbReference>
<dbReference type="GO" id="GO:0005652">
    <property type="term" value="C:nuclear lamina"/>
    <property type="evidence" value="ECO:0007669"/>
    <property type="project" value="TreeGrafter"/>
</dbReference>
<dbReference type="GO" id="GO:0005200">
    <property type="term" value="F:structural constituent of cytoskeleton"/>
    <property type="evidence" value="ECO:0007669"/>
    <property type="project" value="TreeGrafter"/>
</dbReference>
<dbReference type="GO" id="GO:0031507">
    <property type="term" value="P:heterochromatin formation"/>
    <property type="evidence" value="ECO:0007669"/>
    <property type="project" value="TreeGrafter"/>
</dbReference>
<dbReference type="GO" id="GO:0006998">
    <property type="term" value="P:nuclear envelope organization"/>
    <property type="evidence" value="ECO:0007669"/>
    <property type="project" value="TreeGrafter"/>
</dbReference>
<dbReference type="GO" id="GO:0007097">
    <property type="term" value="P:nuclear migration"/>
    <property type="evidence" value="ECO:0007669"/>
    <property type="project" value="TreeGrafter"/>
</dbReference>
<dbReference type="GO" id="GO:0051664">
    <property type="term" value="P:nuclear pore localization"/>
    <property type="evidence" value="ECO:0007669"/>
    <property type="project" value="TreeGrafter"/>
</dbReference>
<dbReference type="GO" id="GO:0090435">
    <property type="term" value="P:protein localization to nuclear envelope"/>
    <property type="evidence" value="ECO:0007669"/>
    <property type="project" value="TreeGrafter"/>
</dbReference>
<dbReference type="Gene3D" id="1.20.5.170">
    <property type="match status" value="1"/>
</dbReference>
<dbReference type="Gene3D" id="1.20.5.340">
    <property type="match status" value="1"/>
</dbReference>
<dbReference type="Gene3D" id="1.20.5.500">
    <property type="entry name" value="Single helix bin"/>
    <property type="match status" value="1"/>
</dbReference>
<dbReference type="InterPro" id="IPR039008">
    <property type="entry name" value="IF_rod_dom"/>
</dbReference>
<dbReference type="PANTHER" id="PTHR45721">
    <property type="entry name" value="LAMIN DM0-RELATED"/>
    <property type="match status" value="1"/>
</dbReference>
<dbReference type="PANTHER" id="PTHR45721:SF11">
    <property type="entry name" value="LAMIN DM0-RELATED"/>
    <property type="match status" value="1"/>
</dbReference>
<dbReference type="Pfam" id="PF00038">
    <property type="entry name" value="Filament"/>
    <property type="match status" value="1"/>
</dbReference>
<dbReference type="SMART" id="SM01391">
    <property type="entry name" value="Filament"/>
    <property type="match status" value="1"/>
</dbReference>
<dbReference type="SUPFAM" id="SSF64593">
    <property type="entry name" value="Intermediate filament protein, coiled coil region"/>
    <property type="match status" value="2"/>
</dbReference>
<dbReference type="PROSITE" id="PS51842">
    <property type="entry name" value="IF_ROD_2"/>
    <property type="match status" value="1"/>
</dbReference>
<feature type="chain" id="PRO_0000440213" description="Cytotardin">
    <location>
        <begin position="1"/>
        <end position="498"/>
    </location>
</feature>
<feature type="domain" description="IF rod" evidence="1 5">
    <location>
        <begin position="22"/>
        <end position="378"/>
    </location>
</feature>
<feature type="region of interest" description="Coil 1A" evidence="5">
    <location>
        <begin position="18"/>
        <end position="58"/>
    </location>
</feature>
<feature type="region of interest" description="Linker 1" evidence="5">
    <location>
        <begin position="59"/>
        <end position="69"/>
    </location>
</feature>
<feature type="region of interest" description="Coil 1B" evidence="5">
    <location>
        <begin position="70"/>
        <end position="213"/>
    </location>
</feature>
<feature type="region of interest" description="Linker 2" evidence="5">
    <location>
        <begin position="214"/>
        <end position="231"/>
    </location>
</feature>
<feature type="region of interest" description="Coil 2" evidence="5">
    <location>
        <begin position="232"/>
        <end position="371"/>
    </location>
</feature>
<feature type="region of interest" description="Disordered" evidence="2">
    <location>
        <begin position="381"/>
        <end position="425"/>
    </location>
</feature>
<feature type="compositionally biased region" description="Gly residues" evidence="2">
    <location>
        <begin position="393"/>
        <end position="409"/>
    </location>
</feature>
<reference key="1">
    <citation type="journal article" date="2016" name="Elife">
        <title>Novel origin of lamin-derived cytoplasmic intermediate filaments in tardigrades.</title>
        <authorList>
            <person name="Hering L."/>
            <person name="Bouameur J.E."/>
            <person name="Reichelt J."/>
            <person name="Magin T.M."/>
            <person name="Mayer G."/>
        </authorList>
    </citation>
    <scope>NUCLEOTIDE SEQUENCE [MRNA]</scope>
    <scope>SUBCELLULAR LOCATION</scope>
    <scope>DOMAIN</scope>
    <scope>FUNCTION</scope>
</reference>
<comment type="function">
    <text evidence="3">Intermediate filament (IF) protein that forms both short filaments and extensive cytoskeletal networks which most likely are homomeric (PubMed:26840051). Some of the cytotardin arrays display cage-like perinuclear structures, while others are located in the periphery close to the cell membrane (PubMed:26840051). The entire tardigrade body is ensheathed by a grid of belt-like filaments formed by the cytotardin protein, which retain their integrity even in contracted specimens (PubMed:26840051). The belt-like structures encircling each epidermal cell might help to resist the shearing forces that arise during freezing and thawing cycles, whereas the dense meshwork at the basis of each claw and around the stylets might provide the tissue stability necessary for locomotion and feeding (PubMed:26840051).</text>
</comment>
<comment type="subcellular location">
    <subcellularLocation>
        <location evidence="3">Cytoplasm</location>
    </subcellularLocation>
    <subcellularLocation>
        <location evidence="3">Cytoplasm</location>
        <location evidence="3">Cell cortex</location>
    </subcellularLocation>
    <text evidence="3">Localizes in the peripheral cytoplasm of all epidermal and foregut cells, where it appears to be closely associated or aligned with the plasma membrane (PubMed:26840051). Occurs close to desmosomes but is not co-localized with desmoplakin (PubMed:26840051).</text>
</comment>
<comment type="domain">
    <text evidence="5">Contains an alpha-helical IF rod domain organization with three coiled coil-forming segments (coil 1A, coil 1B, and coil 2) (PubMed:26840051).</text>
</comment>
<comment type="similarity">
    <text evidence="1">Belongs to the intermediate filament family.</text>
</comment>
<accession>A0A125S9M6</accession>
<evidence type="ECO:0000255" key="1">
    <source>
        <dbReference type="PROSITE-ProRule" id="PRU01188"/>
    </source>
</evidence>
<evidence type="ECO:0000256" key="2">
    <source>
        <dbReference type="SAM" id="MobiDB-lite"/>
    </source>
</evidence>
<evidence type="ECO:0000269" key="3">
    <source>
    </source>
</evidence>
<evidence type="ECO:0000303" key="4">
    <source>
    </source>
</evidence>
<evidence type="ECO:0000305" key="5">
    <source>
    </source>
</evidence>
<sequence length="498" mass="57028">MYSSMASSIRGSTVHLSDRVHSKDELQALNTRLAKYIDKIRNLENENVALQRQLQTAEQTTVTEIHRVSKNYDEELAKLRKQLEDVLRDNARLQMERNSTESENKQLQQRVAQLEKQVRTLEARLRQAEDLVADLQHRLSQSLDVRQQLESDNKDLKNQINSLKGQIQQLKQDYDNERVRTADLENKLQTKEEEHEFEKNALHENLREEKSQRQYLLHDLQRGLQDEFESKLVQQLNELRAEYDEMIKGVRAEVEAKSESRIRDLMAMADQQGDTVTRLQQELEEWRKRSQTTEAELDRLRKENANLNAQLTEIQRQKDDQIRALQQQIRKRQEELQRINDDLGDLTRQYQDLLYVKLALDAELATYNKLLSGEEQRLGMDGSGTVIRRPTGGATGTGSGIYGGTGSGGYSRDIGSTTTTKTTYTSRPTYNYTPIATTPIGGTSTTGRYTPVGGQTLAARQPSPGGSLGRERDIPVLREQKITETFKASGRVGPRTDW</sequence>
<keyword id="KW-0175">Coiled coil</keyword>
<keyword id="KW-0963">Cytoplasm</keyword>
<keyword id="KW-0403">Intermediate filament</keyword>
<keyword id="KW-0346">Stress response</keyword>